<comment type="function">
    <text evidence="1 2">Promotes megakaryocyte differentiation by enhancing ERK and JNK signaling as well as up-regulating RUNX1 and FLI1 expression (By similarity). Represses NF-kappa-B transcriptional activity by inhibiting phosphorylation of RELA at 'Ser- 536' (By similarity). May be involved in early neuronal development (By similarity).</text>
</comment>
<comment type="subcellular location">
    <subcellularLocation>
        <location evidence="2">Cytoplasm</location>
    </subcellularLocation>
</comment>
<comment type="PTM">
    <text evidence="2">Phosphorylation at Tyr-34 is essential for its ability to promote megakaryocyte differentiation.</text>
</comment>
<comment type="similarity">
    <text evidence="4">Belongs to the MTURN family.</text>
</comment>
<protein>
    <recommendedName>
        <fullName>Maturin</fullName>
    </recommendedName>
    <alternativeName>
        <fullName>Maturin neural progenitor differentiation regulator protein homolog</fullName>
    </alternativeName>
</protein>
<gene>
    <name type="primary">Mturn</name>
</gene>
<sequence>MDFQQLADVAEKWCSSTPFELIAAEETERRMDFYADPGVSFYVLCPDNGCGDSFHVWSESEDCLPFLQLAQDYISSCGKKTLQEVLEKVFKSFRPLLGLPDADDDAFEEYSADVEEEEPEADHPQMGVSQQ</sequence>
<reference key="1">
    <citation type="journal article" date="2004" name="Genome Res.">
        <title>The status, quality, and expansion of the NIH full-length cDNA project: the Mammalian Gene Collection (MGC).</title>
        <authorList>
            <consortium name="The MGC Project Team"/>
        </authorList>
    </citation>
    <scope>NUCLEOTIDE SEQUENCE [LARGE SCALE MRNA]</scope>
    <source>
        <tissue>Kidney</tissue>
    </source>
</reference>
<keyword id="KW-0963">Cytoplasm</keyword>
<keyword id="KW-0217">Developmental protein</keyword>
<keyword id="KW-0597">Phosphoprotein</keyword>
<keyword id="KW-1185">Reference proteome</keyword>
<proteinExistence type="evidence at transcript level"/>
<evidence type="ECO:0000250" key="1">
    <source>
        <dbReference type="UniProtKB" id="Q7ZX36"/>
    </source>
</evidence>
<evidence type="ECO:0000250" key="2">
    <source>
        <dbReference type="UniProtKB" id="Q8N3F0"/>
    </source>
</evidence>
<evidence type="ECO:0000256" key="3">
    <source>
        <dbReference type="SAM" id="MobiDB-lite"/>
    </source>
</evidence>
<evidence type="ECO:0000305" key="4"/>
<accession>Q5XI20</accession>
<feature type="chain" id="PRO_0000294235" description="Maturin">
    <location>
        <begin position="1"/>
        <end position="131"/>
    </location>
</feature>
<feature type="region of interest" description="Disordered" evidence="3">
    <location>
        <begin position="107"/>
        <end position="131"/>
    </location>
</feature>
<feature type="compositionally biased region" description="Acidic residues" evidence="3">
    <location>
        <begin position="107"/>
        <end position="120"/>
    </location>
</feature>
<feature type="modified residue" description="Phosphotyrosine" evidence="2">
    <location>
        <position position="34"/>
    </location>
</feature>
<name>MTURN_RAT</name>
<organism>
    <name type="scientific">Rattus norvegicus</name>
    <name type="common">Rat</name>
    <dbReference type="NCBI Taxonomy" id="10116"/>
    <lineage>
        <taxon>Eukaryota</taxon>
        <taxon>Metazoa</taxon>
        <taxon>Chordata</taxon>
        <taxon>Craniata</taxon>
        <taxon>Vertebrata</taxon>
        <taxon>Euteleostomi</taxon>
        <taxon>Mammalia</taxon>
        <taxon>Eutheria</taxon>
        <taxon>Euarchontoglires</taxon>
        <taxon>Glires</taxon>
        <taxon>Rodentia</taxon>
        <taxon>Myomorpha</taxon>
        <taxon>Muroidea</taxon>
        <taxon>Muridae</taxon>
        <taxon>Murinae</taxon>
        <taxon>Rattus</taxon>
    </lineage>
</organism>
<dbReference type="EMBL" id="BC083875">
    <property type="protein sequence ID" value="AAH83875.1"/>
    <property type="molecule type" value="mRNA"/>
</dbReference>
<dbReference type="RefSeq" id="NP_001007646.1">
    <property type="nucleotide sequence ID" value="NM_001007645.2"/>
</dbReference>
<dbReference type="BioGRID" id="255540">
    <property type="interactions" value="1"/>
</dbReference>
<dbReference type="FunCoup" id="Q5XI20">
    <property type="interactions" value="1322"/>
</dbReference>
<dbReference type="STRING" id="10116.ENSRNOP00000013620"/>
<dbReference type="iPTMnet" id="Q5XI20"/>
<dbReference type="PhosphoSitePlus" id="Q5XI20"/>
<dbReference type="PaxDb" id="10116-ENSRNOP00000013620"/>
<dbReference type="GeneID" id="297109"/>
<dbReference type="KEGG" id="rno:297109"/>
<dbReference type="UCSC" id="RGD:1549700">
    <property type="organism name" value="rat"/>
</dbReference>
<dbReference type="AGR" id="RGD:1549700"/>
<dbReference type="CTD" id="222166"/>
<dbReference type="RGD" id="1549700">
    <property type="gene designation" value="Mturn"/>
</dbReference>
<dbReference type="VEuPathDB" id="HostDB:ENSRNOG00000010205"/>
<dbReference type="eggNOG" id="ENOG502RXQA">
    <property type="taxonomic scope" value="Eukaryota"/>
</dbReference>
<dbReference type="HOGENOM" id="CLU_163056_0_0_1"/>
<dbReference type="InParanoid" id="Q5XI20"/>
<dbReference type="OrthoDB" id="9922400at2759"/>
<dbReference type="PRO" id="PR:Q5XI20"/>
<dbReference type="Proteomes" id="UP000002494">
    <property type="component" value="Chromosome 4"/>
</dbReference>
<dbReference type="Bgee" id="ENSRNOG00000010205">
    <property type="expression patterns" value="Expressed in stomach and 17 other cell types or tissues"/>
</dbReference>
<dbReference type="GO" id="GO:0005737">
    <property type="term" value="C:cytoplasm"/>
    <property type="evidence" value="ECO:0000250"/>
    <property type="project" value="UniProtKB"/>
</dbReference>
<dbReference type="GO" id="GO:0070374">
    <property type="term" value="P:positive regulation of ERK1 and ERK2 cascade"/>
    <property type="evidence" value="ECO:0000266"/>
    <property type="project" value="RGD"/>
</dbReference>
<dbReference type="GO" id="GO:0046330">
    <property type="term" value="P:positive regulation of JNK cascade"/>
    <property type="evidence" value="ECO:0000266"/>
    <property type="project" value="RGD"/>
</dbReference>
<dbReference type="GO" id="GO:0045654">
    <property type="term" value="P:positive regulation of megakaryocyte differentiation"/>
    <property type="evidence" value="ECO:0000250"/>
    <property type="project" value="UniProtKB"/>
</dbReference>
<dbReference type="GO" id="GO:0023051">
    <property type="term" value="P:regulation of signaling"/>
    <property type="evidence" value="ECO:0000318"/>
    <property type="project" value="GO_Central"/>
</dbReference>
<dbReference type="InterPro" id="IPR027892">
    <property type="entry name" value="Maturin"/>
</dbReference>
<dbReference type="PANTHER" id="PTHR32008">
    <property type="entry name" value="MATURIN"/>
    <property type="match status" value="1"/>
</dbReference>
<dbReference type="PANTHER" id="PTHR32008:SF2">
    <property type="entry name" value="MATURIN"/>
    <property type="match status" value="1"/>
</dbReference>
<dbReference type="Pfam" id="PF15167">
    <property type="entry name" value="DUF4581"/>
    <property type="match status" value="1"/>
</dbReference>